<reference evidence="4" key="1">
    <citation type="journal article" date="2007" name="J. Cell Sci.">
        <title>Mitch a rapidly evolving component of the Ndc80 kinetochore complex required for correct chromosome segregation in Drosophila.</title>
        <authorList>
            <person name="Williams B."/>
            <person name="Leung G."/>
            <person name="Maiato H."/>
            <person name="Wong A."/>
            <person name="Li Z."/>
            <person name="Williams E.V."/>
            <person name="Kirkpatrick C."/>
            <person name="Aquadro C.F."/>
            <person name="Rieder C.L."/>
            <person name="Goldberg M.L."/>
        </authorList>
    </citation>
    <scope>NUCLEOTIDE SEQUENCE [GENOMIC DNA]</scope>
</reference>
<accession>Q64EV9</accession>
<feature type="chain" id="PRO_0000392418" description="Kinetochore protein Spc25">
    <location>
        <begin position="1"/>
        <end position="223"/>
    </location>
</feature>
<feature type="coiled-coil region" evidence="3">
    <location>
        <begin position="65"/>
        <end position="115"/>
    </location>
</feature>
<keyword id="KW-0131">Cell cycle</keyword>
<keyword id="KW-0132">Cell division</keyword>
<keyword id="KW-0137">Centromere</keyword>
<keyword id="KW-0158">Chromosome</keyword>
<keyword id="KW-0175">Coiled coil</keyword>
<keyword id="KW-0995">Kinetochore</keyword>
<keyword id="KW-0469">Meiosis</keyword>
<keyword id="KW-0498">Mitosis</keyword>
<keyword id="KW-0539">Nucleus</keyword>
<organism>
    <name type="scientific">Drosophila lutescens</name>
    <name type="common">Fruit fly</name>
    <dbReference type="NCBI Taxonomy" id="51159"/>
    <lineage>
        <taxon>Eukaryota</taxon>
        <taxon>Metazoa</taxon>
        <taxon>Ecdysozoa</taxon>
        <taxon>Arthropoda</taxon>
        <taxon>Hexapoda</taxon>
        <taxon>Insecta</taxon>
        <taxon>Pterygota</taxon>
        <taxon>Neoptera</taxon>
        <taxon>Endopterygota</taxon>
        <taxon>Diptera</taxon>
        <taxon>Brachycera</taxon>
        <taxon>Muscomorpha</taxon>
        <taxon>Ephydroidea</taxon>
        <taxon>Drosophilidae</taxon>
        <taxon>Drosophila</taxon>
        <taxon>Sophophora</taxon>
    </lineage>
</organism>
<evidence type="ECO:0000250" key="1">
    <source>
        <dbReference type="UniProtKB" id="Q9HBM1"/>
    </source>
</evidence>
<evidence type="ECO:0000250" key="2">
    <source>
        <dbReference type="UniProtKB" id="Q9V3V7"/>
    </source>
</evidence>
<evidence type="ECO:0000255" key="3"/>
<evidence type="ECO:0000312" key="4">
    <source>
        <dbReference type="EMBL" id="AAU15008.1"/>
    </source>
</evidence>
<comment type="function">
    <text evidence="1 2">Acts as a component of the essential kinetochore-associated Ndc80 complex, which is required for chromosome segregation and spindle checkpoint activity during meiosis and mitosis. Required for kinetochore integrity and the organization of stable microtubule binding sites in the outer plate of the kinetochore. Participates in SAC signaling that responds specifically to disruptions in spindle microtubule dynamics. The NDC80 complex synergistically enhances the affinity of the SKA1 complex for microtubules and may allow the NDC80 complex to track depolymerizing microtubules.</text>
</comment>
<comment type="subunit">
    <text evidence="2">Component of the Ndc80 complex, which is composed of Ndc80, Nuf2 and Spc25.</text>
</comment>
<comment type="subcellular location">
    <subcellularLocation>
        <location evidence="2">Nucleus</location>
    </subcellularLocation>
    <subcellularLocation>
        <location evidence="2">Chromosome</location>
        <location evidence="2">Centromere</location>
        <location evidence="2">Kinetochore</location>
    </subcellularLocation>
</comment>
<comment type="similarity">
    <text evidence="3">Belongs to the SPC25 family.</text>
</comment>
<gene>
    <name evidence="2" type="primary">Spc25</name>
    <name evidence="4" type="synonym">mitch</name>
</gene>
<proteinExistence type="inferred from homology"/>
<name>SPC25_DROLT</name>
<protein>
    <recommendedName>
        <fullName evidence="2">Kinetochore protein Spc25</fullName>
    </recommendedName>
</protein>
<sequence length="223" mass="25447">MAKAVDESTYEQRVRALYDKQIRMEAREAGVIKKISKFNSNLLDLKEAVVRHHQKVGKVRKVKMLRCGELEKRANFMEELTQELEATKQRNLVMRDQIKQLNVLARQHRNEVMESIHTLSKTTGTYLNHEALPARVKGVTVLRNDNSDQLIPFDLKATDVEGLESLCQHLQGFNIDAFQWRQLVSLATEMSMDSHTTPTTPPKEAAEGKSIIEIDLTSPTSHI</sequence>
<dbReference type="EMBL" id="AY714314">
    <property type="protein sequence ID" value="AAU15008.1"/>
    <property type="molecule type" value="Genomic_DNA"/>
</dbReference>
<dbReference type="SMR" id="Q64EV9"/>
<dbReference type="GO" id="GO:0031262">
    <property type="term" value="C:Ndc80 complex"/>
    <property type="evidence" value="ECO:0000250"/>
    <property type="project" value="UniProtKB"/>
</dbReference>
<dbReference type="GO" id="GO:0005634">
    <property type="term" value="C:nucleus"/>
    <property type="evidence" value="ECO:0007669"/>
    <property type="project" value="UniProtKB-SubCell"/>
</dbReference>
<dbReference type="GO" id="GO:0051301">
    <property type="term" value="P:cell division"/>
    <property type="evidence" value="ECO:0007669"/>
    <property type="project" value="UniProtKB-KW"/>
</dbReference>
<dbReference type="GO" id="GO:0051311">
    <property type="term" value="P:meiotic metaphase chromosome alignment"/>
    <property type="evidence" value="ECO:0000250"/>
    <property type="project" value="UniProtKB"/>
</dbReference>
<dbReference type="GO" id="GO:0000212">
    <property type="term" value="P:meiotic spindle organization"/>
    <property type="evidence" value="ECO:0000250"/>
    <property type="project" value="UniProtKB"/>
</dbReference>
<dbReference type="GO" id="GO:0007080">
    <property type="term" value="P:mitotic metaphase chromosome alignment"/>
    <property type="evidence" value="ECO:0000250"/>
    <property type="project" value="UniProtKB"/>
</dbReference>